<protein>
    <recommendedName>
        <fullName evidence="1">Large ribosomal subunit protein P1</fullName>
    </recommendedName>
    <alternativeName>
        <fullName evidence="1">50S ribosomal protein L12</fullName>
    </alternativeName>
    <alternativeName>
        <fullName>Hmal12</fullName>
    </alternativeName>
</protein>
<comment type="function">
    <text evidence="3">Forms part of the ribosomal stalk, playing a central role in the interaction of the ribosome with GTP-bound translation factors.</text>
</comment>
<comment type="subunit">
    <text evidence="1">Part of the 50S ribosomal subunit. Homodimer, it forms part of the ribosomal stalk which helps the ribosome interact with GTP-bound translation factors. Forms a heptameric uL10/P0(P1)2(P1)2(P1)2 complex, where uL10/P0 forms an elongated spine to which the P1 dimers bind in a sequential fashion.</text>
</comment>
<comment type="similarity">
    <text evidence="1">Belongs to the eukaryotic ribosomal protein P1/P2 family.</text>
</comment>
<proteinExistence type="inferred from homology"/>
<dbReference type="EMBL" id="X51430">
    <property type="protein sequence ID" value="CAA35796.1"/>
    <property type="molecule type" value="Genomic_DNA"/>
</dbReference>
<dbReference type="EMBL" id="AY596297">
    <property type="protein sequence ID" value="AAV46345.1"/>
    <property type="molecule type" value="Genomic_DNA"/>
</dbReference>
<dbReference type="PIR" id="S08423">
    <property type="entry name" value="R5HS12"/>
</dbReference>
<dbReference type="SMR" id="P15772"/>
<dbReference type="IntAct" id="P15772">
    <property type="interactions" value="1"/>
</dbReference>
<dbReference type="STRING" id="272569.rrnAC1418"/>
<dbReference type="PaxDb" id="272569-rrnAC1418"/>
<dbReference type="EnsemblBacteria" id="AAV46345">
    <property type="protein sequence ID" value="AAV46345"/>
    <property type="gene ID" value="rrnAC1418"/>
</dbReference>
<dbReference type="KEGG" id="hma:rrnAC1418"/>
<dbReference type="PATRIC" id="fig|272569.17.peg.2112"/>
<dbReference type="eggNOG" id="arCOG04287">
    <property type="taxonomic scope" value="Archaea"/>
</dbReference>
<dbReference type="HOGENOM" id="CLU_114656_2_0_2"/>
<dbReference type="Proteomes" id="UP000001169">
    <property type="component" value="Chromosome I"/>
</dbReference>
<dbReference type="GO" id="GO:1990904">
    <property type="term" value="C:ribonucleoprotein complex"/>
    <property type="evidence" value="ECO:0007669"/>
    <property type="project" value="UniProtKB-KW"/>
</dbReference>
<dbReference type="GO" id="GO:0005840">
    <property type="term" value="C:ribosome"/>
    <property type="evidence" value="ECO:0007669"/>
    <property type="project" value="UniProtKB-KW"/>
</dbReference>
<dbReference type="GO" id="GO:0003735">
    <property type="term" value="F:structural constituent of ribosome"/>
    <property type="evidence" value="ECO:0007669"/>
    <property type="project" value="InterPro"/>
</dbReference>
<dbReference type="GO" id="GO:0006414">
    <property type="term" value="P:translational elongation"/>
    <property type="evidence" value="ECO:0007669"/>
    <property type="project" value="InterPro"/>
</dbReference>
<dbReference type="FunFam" id="1.10.10.1410:FF:000002">
    <property type="entry name" value="60S acidic ribosomal protein P2"/>
    <property type="match status" value="1"/>
</dbReference>
<dbReference type="Gene3D" id="1.10.10.1410">
    <property type="match status" value="1"/>
</dbReference>
<dbReference type="HAMAP" id="MF_01478">
    <property type="entry name" value="Ribosomal_L12_arch"/>
    <property type="match status" value="1"/>
</dbReference>
<dbReference type="InterPro" id="IPR038716">
    <property type="entry name" value="P1/P2_N_sf"/>
</dbReference>
<dbReference type="InterPro" id="IPR027534">
    <property type="entry name" value="Ribosomal_P1/P2"/>
</dbReference>
<dbReference type="InterPro" id="IPR022295">
    <property type="entry name" value="Ribosomal_P1_arc"/>
</dbReference>
<dbReference type="NCBIfam" id="TIGR03685">
    <property type="entry name" value="ribo_P1_arch"/>
    <property type="match status" value="1"/>
</dbReference>
<dbReference type="Pfam" id="PF00428">
    <property type="entry name" value="Ribosomal_60s"/>
    <property type="match status" value="1"/>
</dbReference>
<feature type="chain" id="PRO_0000157627" description="Large ribosomal subunit protein P1">
    <location>
        <begin position="1"/>
        <end position="115"/>
    </location>
</feature>
<feature type="region of interest" description="Disordered" evidence="2">
    <location>
        <begin position="56"/>
        <end position="115"/>
    </location>
</feature>
<feature type="compositionally biased region" description="Low complexity" evidence="2">
    <location>
        <begin position="56"/>
        <end position="73"/>
    </location>
</feature>
<feature type="compositionally biased region" description="Acidic residues" evidence="2">
    <location>
        <begin position="74"/>
        <end position="106"/>
    </location>
</feature>
<sequence length="115" mass="11773">MEYVYAALILNEADEEINEDNLTDVLDAAGVDVEESRVKALVAALEDVDIEEAVDQAAAAPVPASGGAAAPAEGDADEADEADEEAEEEAADDGGDDDDDEDDEASGEGLGELFG</sequence>
<keyword id="KW-1185">Reference proteome</keyword>
<keyword id="KW-0687">Ribonucleoprotein</keyword>
<keyword id="KW-0689">Ribosomal protein</keyword>
<organism>
    <name type="scientific">Haloarcula marismortui (strain ATCC 43049 / DSM 3752 / JCM 8966 / VKM B-1809)</name>
    <name type="common">Halobacterium marismortui</name>
    <dbReference type="NCBI Taxonomy" id="272569"/>
    <lineage>
        <taxon>Archaea</taxon>
        <taxon>Methanobacteriati</taxon>
        <taxon>Methanobacteriota</taxon>
        <taxon>Stenosarchaea group</taxon>
        <taxon>Halobacteria</taxon>
        <taxon>Halobacteriales</taxon>
        <taxon>Haloarculaceae</taxon>
        <taxon>Haloarcula</taxon>
    </lineage>
</organism>
<accession>P15772</accession>
<accession>Q5V2A7</accession>
<gene>
    <name evidence="1" type="primary">rpl12</name>
    <name type="ordered locus">rrnAC1418</name>
</gene>
<evidence type="ECO:0000255" key="1">
    <source>
        <dbReference type="HAMAP-Rule" id="MF_01478"/>
    </source>
</evidence>
<evidence type="ECO:0000256" key="2">
    <source>
        <dbReference type="SAM" id="MobiDB-lite"/>
    </source>
</evidence>
<evidence type="ECO:0000305" key="3"/>
<name>RL12_HALMA</name>
<reference key="1">
    <citation type="journal article" date="1990" name="Nucleic Acids Res.">
        <title>Nucleotide sequence of the genes encoding the L11, L1, L10 and L12 equivalent ribosomal proteins from the archaebacterium Halobacterium marismortui.</title>
        <authorList>
            <person name="Arndt E."/>
            <person name="Weigel C."/>
        </authorList>
    </citation>
    <scope>NUCLEOTIDE SEQUENCE [GENOMIC DNA]</scope>
</reference>
<reference key="2">
    <citation type="journal article" date="2004" name="Genome Res.">
        <title>Genome sequence of Haloarcula marismortui: a halophilic archaeon from the Dead Sea.</title>
        <authorList>
            <person name="Baliga N.S."/>
            <person name="Bonneau R."/>
            <person name="Facciotti M.T."/>
            <person name="Pan M."/>
            <person name="Glusman G."/>
            <person name="Deutsch E.W."/>
            <person name="Shannon P."/>
            <person name="Chiu Y."/>
            <person name="Weng R.S."/>
            <person name="Gan R.R."/>
            <person name="Hung P."/>
            <person name="Date S.V."/>
            <person name="Marcotte E."/>
            <person name="Hood L."/>
            <person name="Ng W.V."/>
        </authorList>
    </citation>
    <scope>NUCLEOTIDE SEQUENCE [LARGE SCALE GENOMIC DNA]</scope>
    <source>
        <strain>ATCC 43049 / DSM 3752 / JCM 8966 / VKM B-1809</strain>
    </source>
</reference>